<reference key="1">
    <citation type="submission" date="2008-10" db="EMBL/GenBank/DDBJ databases">
        <title>Genome sequence of Bacillus cereus G9842.</title>
        <authorList>
            <person name="Dodson R.J."/>
            <person name="Durkin A.S."/>
            <person name="Rosovitz M.J."/>
            <person name="Rasko D.A."/>
            <person name="Hoffmaster A."/>
            <person name="Ravel J."/>
            <person name="Sutton G."/>
        </authorList>
    </citation>
    <scope>NUCLEOTIDE SEQUENCE [LARGE SCALE GENOMIC DNA]</scope>
    <source>
        <strain>G9842</strain>
    </source>
</reference>
<feature type="chain" id="PRO_1000130815" description="Serine-protein kinase RsbW">
    <location>
        <begin position="1"/>
        <end position="160"/>
    </location>
</feature>
<gene>
    <name evidence="1" type="primary">rsbW</name>
    <name type="ordered locus">BCG9842_B4271</name>
</gene>
<keyword id="KW-0067">ATP-binding</keyword>
<keyword id="KW-0418">Kinase</keyword>
<keyword id="KW-0547">Nucleotide-binding</keyword>
<keyword id="KW-0723">Serine/threonine-protein kinase</keyword>
<keyword id="KW-0808">Transferase</keyword>
<evidence type="ECO:0000255" key="1">
    <source>
        <dbReference type="HAMAP-Rule" id="MF_00638"/>
    </source>
</evidence>
<proteinExistence type="inferred from homology"/>
<comment type="function">
    <text evidence="1">Negative regulator of sigma-B activity. Phosphorylates and inactivates its specific antagonist protein, RsbV. Upon phosphorylation of RsbV, RsbW is released and binds to sigma-B, thereby blocking its ability to form an RNA polymerase holoenzyme (E-sigma-B).</text>
</comment>
<comment type="catalytic activity">
    <reaction evidence="1">
        <text>L-seryl-[protein] + ATP = O-phospho-L-seryl-[protein] + ADP + H(+)</text>
        <dbReference type="Rhea" id="RHEA:17989"/>
        <dbReference type="Rhea" id="RHEA-COMP:9863"/>
        <dbReference type="Rhea" id="RHEA-COMP:11604"/>
        <dbReference type="ChEBI" id="CHEBI:15378"/>
        <dbReference type="ChEBI" id="CHEBI:29999"/>
        <dbReference type="ChEBI" id="CHEBI:30616"/>
        <dbReference type="ChEBI" id="CHEBI:83421"/>
        <dbReference type="ChEBI" id="CHEBI:456216"/>
        <dbReference type="EC" id="2.7.11.1"/>
    </reaction>
</comment>
<comment type="catalytic activity">
    <reaction evidence="1">
        <text>L-threonyl-[protein] + ATP = O-phospho-L-threonyl-[protein] + ADP + H(+)</text>
        <dbReference type="Rhea" id="RHEA:46608"/>
        <dbReference type="Rhea" id="RHEA-COMP:11060"/>
        <dbReference type="Rhea" id="RHEA-COMP:11605"/>
        <dbReference type="ChEBI" id="CHEBI:15378"/>
        <dbReference type="ChEBI" id="CHEBI:30013"/>
        <dbReference type="ChEBI" id="CHEBI:30616"/>
        <dbReference type="ChEBI" id="CHEBI:61977"/>
        <dbReference type="ChEBI" id="CHEBI:456216"/>
        <dbReference type="EC" id="2.7.11.1"/>
    </reaction>
</comment>
<comment type="similarity">
    <text evidence="1">Belongs to the anti-sigma-factor family.</text>
</comment>
<name>RSBW_BACC2</name>
<accession>B7IK73</accession>
<sequence>MMERFEKIEMKIPAKAEYVAIIRLTMAGVANRMGFAYDDIEDMKIAISEACTNIVQHAYKEDVGEITIVFGLYEDRLEIMAADNGVSFDFSSLKSKVGPYDINKPVEHLPENGLGLYLINTLMDDIQIMHDEGMTVLMTKYIQREQVENDGNPISTYNSY</sequence>
<organism>
    <name type="scientific">Bacillus cereus (strain G9842)</name>
    <dbReference type="NCBI Taxonomy" id="405531"/>
    <lineage>
        <taxon>Bacteria</taxon>
        <taxon>Bacillati</taxon>
        <taxon>Bacillota</taxon>
        <taxon>Bacilli</taxon>
        <taxon>Bacillales</taxon>
        <taxon>Bacillaceae</taxon>
        <taxon>Bacillus</taxon>
        <taxon>Bacillus cereus group</taxon>
    </lineage>
</organism>
<protein>
    <recommendedName>
        <fullName evidence="1">Serine-protein kinase RsbW</fullName>
        <ecNumber evidence="1">2.7.11.1</ecNumber>
    </recommendedName>
    <alternativeName>
        <fullName evidence="1">Anti-sigma-B factor</fullName>
    </alternativeName>
    <alternativeName>
        <fullName evidence="1">Sigma-B negative effector RsbW</fullName>
    </alternativeName>
</protein>
<dbReference type="EC" id="2.7.11.1" evidence="1"/>
<dbReference type="EMBL" id="CP001186">
    <property type="protein sequence ID" value="ACK97427.1"/>
    <property type="molecule type" value="Genomic_DNA"/>
</dbReference>
<dbReference type="RefSeq" id="WP_000970581.1">
    <property type="nucleotide sequence ID" value="NC_011772.1"/>
</dbReference>
<dbReference type="SMR" id="B7IK73"/>
<dbReference type="KEGG" id="bcg:BCG9842_B4271"/>
<dbReference type="HOGENOM" id="CLU_090336_11_1_9"/>
<dbReference type="Proteomes" id="UP000006744">
    <property type="component" value="Chromosome"/>
</dbReference>
<dbReference type="GO" id="GO:0005524">
    <property type="term" value="F:ATP binding"/>
    <property type="evidence" value="ECO:0007669"/>
    <property type="project" value="UniProtKB-KW"/>
</dbReference>
<dbReference type="GO" id="GO:0106310">
    <property type="term" value="F:protein serine kinase activity"/>
    <property type="evidence" value="ECO:0007669"/>
    <property type="project" value="RHEA"/>
</dbReference>
<dbReference type="GO" id="GO:0004674">
    <property type="term" value="F:protein serine/threonine kinase activity"/>
    <property type="evidence" value="ECO:0007669"/>
    <property type="project" value="UniProtKB-KW"/>
</dbReference>
<dbReference type="GO" id="GO:0016989">
    <property type="term" value="F:sigma factor antagonist activity"/>
    <property type="evidence" value="ECO:0007669"/>
    <property type="project" value="InterPro"/>
</dbReference>
<dbReference type="CDD" id="cd16936">
    <property type="entry name" value="HATPase_RsbW-like"/>
    <property type="match status" value="1"/>
</dbReference>
<dbReference type="FunFam" id="3.30.565.10:FF:000026">
    <property type="entry name" value="Serine-protein kinase RsbW"/>
    <property type="match status" value="1"/>
</dbReference>
<dbReference type="Gene3D" id="3.30.565.10">
    <property type="entry name" value="Histidine kinase-like ATPase, C-terminal domain"/>
    <property type="match status" value="1"/>
</dbReference>
<dbReference type="HAMAP" id="MF_00638">
    <property type="entry name" value="Anti_sigma_B"/>
    <property type="match status" value="1"/>
</dbReference>
<dbReference type="InterPro" id="IPR050267">
    <property type="entry name" value="Anti-sigma-factor_SerPK"/>
</dbReference>
<dbReference type="InterPro" id="IPR036890">
    <property type="entry name" value="HATPase_C_sf"/>
</dbReference>
<dbReference type="InterPro" id="IPR010193">
    <property type="entry name" value="RsbW"/>
</dbReference>
<dbReference type="NCBIfam" id="NF003144">
    <property type="entry name" value="PRK04069.1"/>
    <property type="match status" value="1"/>
</dbReference>
<dbReference type="NCBIfam" id="TIGR01924">
    <property type="entry name" value="rsbW_low_gc"/>
    <property type="match status" value="1"/>
</dbReference>
<dbReference type="PANTHER" id="PTHR35526">
    <property type="entry name" value="ANTI-SIGMA-F FACTOR RSBW-RELATED"/>
    <property type="match status" value="1"/>
</dbReference>
<dbReference type="PANTHER" id="PTHR35526:SF9">
    <property type="entry name" value="SERINE-PROTEIN KINASE RSBW"/>
    <property type="match status" value="1"/>
</dbReference>
<dbReference type="Pfam" id="PF13581">
    <property type="entry name" value="HATPase_c_2"/>
    <property type="match status" value="1"/>
</dbReference>
<dbReference type="SUPFAM" id="SSF55874">
    <property type="entry name" value="ATPase domain of HSP90 chaperone/DNA topoisomerase II/histidine kinase"/>
    <property type="match status" value="1"/>
</dbReference>